<organism>
    <name type="scientific">Arabidopsis thaliana</name>
    <name type="common">Mouse-ear cress</name>
    <dbReference type="NCBI Taxonomy" id="3702"/>
    <lineage>
        <taxon>Eukaryota</taxon>
        <taxon>Viridiplantae</taxon>
        <taxon>Streptophyta</taxon>
        <taxon>Embryophyta</taxon>
        <taxon>Tracheophyta</taxon>
        <taxon>Spermatophyta</taxon>
        <taxon>Magnoliopsida</taxon>
        <taxon>eudicotyledons</taxon>
        <taxon>Gunneridae</taxon>
        <taxon>Pentapetalae</taxon>
        <taxon>rosids</taxon>
        <taxon>malvids</taxon>
        <taxon>Brassicales</taxon>
        <taxon>Brassicaceae</taxon>
        <taxon>Camelineae</taxon>
        <taxon>Arabidopsis</taxon>
    </lineage>
</organism>
<feature type="signal peptide" evidence="1">
    <location>
        <begin position="1"/>
        <end position="25"/>
    </location>
</feature>
<feature type="chain" id="PRO_0000041641" description="Zinc transporter 3">
    <location>
        <begin position="26"/>
        <end position="339"/>
    </location>
</feature>
<feature type="topological domain" description="Extracellular" evidence="1">
    <location>
        <begin position="26"/>
        <end position="54"/>
    </location>
</feature>
<feature type="transmembrane region" description="Helical" evidence="1">
    <location>
        <begin position="55"/>
        <end position="75"/>
    </location>
</feature>
<feature type="topological domain" description="Cytoplasmic" evidence="1">
    <location>
        <begin position="76"/>
        <end position="86"/>
    </location>
</feature>
<feature type="transmembrane region" description="Helical" evidence="1">
    <location>
        <begin position="87"/>
        <end position="107"/>
    </location>
</feature>
<feature type="topological domain" description="Extracellular" evidence="1">
    <location>
        <begin position="108"/>
        <end position="123"/>
    </location>
</feature>
<feature type="transmembrane region" description="Helical" evidence="1">
    <location>
        <begin position="124"/>
        <end position="144"/>
    </location>
</feature>
<feature type="topological domain" description="Cytoplasmic" evidence="1">
    <location>
        <begin position="145"/>
        <end position="184"/>
    </location>
</feature>
<feature type="transmembrane region" description="Helical" evidence="1">
    <location>
        <begin position="185"/>
        <end position="205"/>
    </location>
</feature>
<feature type="topological domain" description="Extracellular" evidence="1">
    <location>
        <begin position="206"/>
        <end position="216"/>
    </location>
</feature>
<feature type="transmembrane region" description="Helical" evidence="1">
    <location>
        <begin position="217"/>
        <end position="237"/>
    </location>
</feature>
<feature type="topological domain" description="Cytoplasmic" evidence="1">
    <location>
        <begin position="238"/>
        <end position="247"/>
    </location>
</feature>
<feature type="transmembrane region" description="Helical" evidence="1">
    <location>
        <begin position="248"/>
        <end position="268"/>
    </location>
</feature>
<feature type="topological domain" description="Extracellular" evidence="1">
    <location>
        <begin position="269"/>
        <end position="278"/>
    </location>
</feature>
<feature type="transmembrane region" description="Helical" evidence="1">
    <location>
        <begin position="279"/>
        <end position="299"/>
    </location>
</feature>
<feature type="topological domain" description="Cytoplasmic" evidence="1">
    <location>
        <begin position="300"/>
        <end position="315"/>
    </location>
</feature>
<feature type="transmembrane region" description="Helical" evidence="1">
    <location>
        <begin position="316"/>
        <end position="336"/>
    </location>
</feature>
<feature type="topological domain" description="Extracellular" evidence="1">
    <location>
        <begin position="337"/>
        <end position="339"/>
    </location>
</feature>
<feature type="sequence conflict" description="In Ref. 1; AAC24199." evidence="3" ref="1">
    <original>N</original>
    <variation>S</variation>
    <location>
        <position position="5"/>
    </location>
</feature>
<feature type="sequence conflict" description="In Ref. 1; AAC24199." evidence="3" ref="1">
    <original>T</original>
    <variation>I</variation>
    <location>
        <position position="121"/>
    </location>
</feature>
<name>ZIP3_ARATH</name>
<accession>Q9SLG3</accession>
<accession>O81125</accession>
<keyword id="KW-1003">Cell membrane</keyword>
<keyword id="KW-0406">Ion transport</keyword>
<keyword id="KW-0472">Membrane</keyword>
<keyword id="KW-1185">Reference proteome</keyword>
<keyword id="KW-0732">Signal</keyword>
<keyword id="KW-0812">Transmembrane</keyword>
<keyword id="KW-1133">Transmembrane helix</keyword>
<keyword id="KW-0813">Transport</keyword>
<keyword id="KW-0862">Zinc</keyword>
<keyword id="KW-0864">Zinc transport</keyword>
<sequence length="339" mass="36043">MKTKNVKLLFFFFSVSLLLIAVVNAAEGHSHGGPKCECSHEDDHENKAGARKYKIAAIPTVLIAGIIGVLFPLLGKVFPSLRPETCFFFVTKAFAAGVILATGFMHVLPEAYEMLNSPCLTSEAWEFPFTGFIAMIAAILTLSVDTFATSSFYKSHCKASKRVSDGETGESSVDSEKVQILRTRVIAQVLELGIIVHSVVIGISLGASQSPDAAKALFIALMFHQCFEGLGLGGCIAQGKFKCLSVTIMSTFFAITTPIGIVVGMGIANSYDESSPTALIVQGVLNAASAGILIYMSLVDLLAADFTHPKMQSNTGLQIMAHIALLLGAGLMSLLAKWA</sequence>
<gene>
    <name type="primary">ZIP3</name>
    <name type="ordered locus">At2g32270</name>
    <name type="ORF">T32F6.21</name>
</gene>
<proteinExistence type="evidence at transcript level"/>
<reference key="1">
    <citation type="journal article" date="1998" name="Proc. Natl. Acad. Sci. U.S.A.">
        <title>Identification of a family of zinc transporter genes from Arabidopsis that respond to zinc deficiency.</title>
        <authorList>
            <person name="Grotz N."/>
            <person name="Fox T."/>
            <person name="Connolly E."/>
            <person name="Park W."/>
            <person name="Guerinot M.L."/>
            <person name="Eide D."/>
        </authorList>
    </citation>
    <scope>NUCLEOTIDE SEQUENCE [MRNA]</scope>
    <scope>FUNCTION</scope>
    <scope>INDUCTION</scope>
    <source>
        <strain>cv. Landsberg erecta</strain>
    </source>
</reference>
<reference key="2">
    <citation type="journal article" date="1999" name="Nature">
        <title>Sequence and analysis of chromosome 2 of the plant Arabidopsis thaliana.</title>
        <authorList>
            <person name="Lin X."/>
            <person name="Kaul S."/>
            <person name="Rounsley S.D."/>
            <person name="Shea T.P."/>
            <person name="Benito M.-I."/>
            <person name="Town C.D."/>
            <person name="Fujii C.Y."/>
            <person name="Mason T.M."/>
            <person name="Bowman C.L."/>
            <person name="Barnstead M.E."/>
            <person name="Feldblyum T.V."/>
            <person name="Buell C.R."/>
            <person name="Ketchum K.A."/>
            <person name="Lee J.J."/>
            <person name="Ronning C.M."/>
            <person name="Koo H.L."/>
            <person name="Moffat K.S."/>
            <person name="Cronin L.A."/>
            <person name="Shen M."/>
            <person name="Pai G."/>
            <person name="Van Aken S."/>
            <person name="Umayam L."/>
            <person name="Tallon L.J."/>
            <person name="Gill J.E."/>
            <person name="Adams M.D."/>
            <person name="Carrera A.J."/>
            <person name="Creasy T.H."/>
            <person name="Goodman H.M."/>
            <person name="Somerville C.R."/>
            <person name="Copenhaver G.P."/>
            <person name="Preuss D."/>
            <person name="Nierman W.C."/>
            <person name="White O."/>
            <person name="Eisen J.A."/>
            <person name="Salzberg S.L."/>
            <person name="Fraser C.M."/>
            <person name="Venter J.C."/>
        </authorList>
    </citation>
    <scope>NUCLEOTIDE SEQUENCE [LARGE SCALE GENOMIC DNA]</scope>
    <source>
        <strain>cv. Columbia</strain>
    </source>
</reference>
<reference key="3">
    <citation type="journal article" date="2017" name="Plant J.">
        <title>Araport11: a complete reannotation of the Arabidopsis thaliana reference genome.</title>
        <authorList>
            <person name="Cheng C.Y."/>
            <person name="Krishnakumar V."/>
            <person name="Chan A.P."/>
            <person name="Thibaud-Nissen F."/>
            <person name="Schobel S."/>
            <person name="Town C.D."/>
        </authorList>
    </citation>
    <scope>GENOME REANNOTATION</scope>
    <source>
        <strain>cv. Columbia</strain>
    </source>
</reference>
<evidence type="ECO:0000255" key="1"/>
<evidence type="ECO:0000269" key="2">
    <source>
    </source>
</evidence>
<evidence type="ECO:0000305" key="3"/>
<protein>
    <recommendedName>
        <fullName>Zinc transporter 3</fullName>
    </recommendedName>
    <alternativeName>
        <fullName>ZRT/IRT-like protein 3</fullName>
    </alternativeName>
</protein>
<dbReference type="EMBL" id="AF033537">
    <property type="protein sequence ID" value="AAC24199.1"/>
    <property type="molecule type" value="mRNA"/>
</dbReference>
<dbReference type="EMBL" id="AC005700">
    <property type="protein sequence ID" value="AAC69954.1"/>
    <property type="molecule type" value="Genomic_DNA"/>
</dbReference>
<dbReference type="EMBL" id="CP002685">
    <property type="protein sequence ID" value="AEC08660.1"/>
    <property type="molecule type" value="Genomic_DNA"/>
</dbReference>
<dbReference type="PIR" id="A84731">
    <property type="entry name" value="A84731"/>
</dbReference>
<dbReference type="PIR" id="T52185">
    <property type="entry name" value="T52185"/>
</dbReference>
<dbReference type="RefSeq" id="NP_180786.1">
    <property type="nucleotide sequence ID" value="NM_128786.4"/>
</dbReference>
<dbReference type="SMR" id="Q9SLG3"/>
<dbReference type="FunCoup" id="Q9SLG3">
    <property type="interactions" value="2877"/>
</dbReference>
<dbReference type="STRING" id="3702.Q9SLG3"/>
<dbReference type="PaxDb" id="3702-AT2G32270.1"/>
<dbReference type="ProteomicsDB" id="242950"/>
<dbReference type="EnsemblPlants" id="AT2G32270.1">
    <property type="protein sequence ID" value="AT2G32270.1"/>
    <property type="gene ID" value="AT2G32270"/>
</dbReference>
<dbReference type="GeneID" id="817787"/>
<dbReference type="Gramene" id="AT2G32270.1">
    <property type="protein sequence ID" value="AT2G32270.1"/>
    <property type="gene ID" value="AT2G32270"/>
</dbReference>
<dbReference type="KEGG" id="ath:AT2G32270"/>
<dbReference type="Araport" id="AT2G32270"/>
<dbReference type="TAIR" id="AT2G32270">
    <property type="gene designation" value="ZIP3"/>
</dbReference>
<dbReference type="eggNOG" id="KOG1558">
    <property type="taxonomic scope" value="Eukaryota"/>
</dbReference>
<dbReference type="HOGENOM" id="CLU_027089_3_0_1"/>
<dbReference type="InParanoid" id="Q9SLG3"/>
<dbReference type="OMA" id="HHHGHFN"/>
<dbReference type="OrthoDB" id="448280at2759"/>
<dbReference type="PhylomeDB" id="Q9SLG3"/>
<dbReference type="PRO" id="PR:Q9SLG3"/>
<dbReference type="Proteomes" id="UP000006548">
    <property type="component" value="Chromosome 2"/>
</dbReference>
<dbReference type="ExpressionAtlas" id="Q9SLG3">
    <property type="expression patterns" value="baseline and differential"/>
</dbReference>
<dbReference type="GO" id="GO:0005886">
    <property type="term" value="C:plasma membrane"/>
    <property type="evidence" value="ECO:0007669"/>
    <property type="project" value="UniProtKB-SubCell"/>
</dbReference>
<dbReference type="GO" id="GO:0005385">
    <property type="term" value="F:zinc ion transmembrane transporter activity"/>
    <property type="evidence" value="ECO:0000314"/>
    <property type="project" value="TAIR"/>
</dbReference>
<dbReference type="InterPro" id="IPR003689">
    <property type="entry name" value="ZIP"/>
</dbReference>
<dbReference type="InterPro" id="IPR004698">
    <property type="entry name" value="Zn/Fe_permease_fun/pln"/>
</dbReference>
<dbReference type="NCBIfam" id="TIGR00820">
    <property type="entry name" value="zip"/>
    <property type="match status" value="1"/>
</dbReference>
<dbReference type="PANTHER" id="PTHR11040:SF141">
    <property type="entry name" value="ZINC TRANSPORTER 3"/>
    <property type="match status" value="1"/>
</dbReference>
<dbReference type="PANTHER" id="PTHR11040">
    <property type="entry name" value="ZINC/IRON TRANSPORTER"/>
    <property type="match status" value="1"/>
</dbReference>
<dbReference type="Pfam" id="PF02535">
    <property type="entry name" value="Zip"/>
    <property type="match status" value="1"/>
</dbReference>
<comment type="function">
    <text evidence="2">Mediates zinc uptake from the rhizosphere. May also transport other divalent cations.</text>
</comment>
<comment type="subcellular location">
    <subcellularLocation>
        <location evidence="3">Cell membrane</location>
        <topology evidence="3">Multi-pass membrane protein</topology>
    </subcellularLocation>
</comment>
<comment type="tissue specificity">
    <text>Expressed predominantly in the roots of zinc-deficient plants.</text>
</comment>
<comment type="induction">
    <text evidence="2">By zinc starvation.</text>
</comment>
<comment type="miscellaneous">
    <text>Zinc uptake is inhibited by copper, cobalt, cadmium, iron and manganese ions.</text>
</comment>
<comment type="similarity">
    <text evidence="3">Belongs to the ZIP transporter (TC 2.A.5) family.</text>
</comment>